<protein>
    <recommendedName>
        <fullName evidence="2">Glutamate-1-semialdehyde 2,1-aminomutase</fullName>
        <shortName evidence="2">GSA</shortName>
        <ecNumber evidence="2">5.4.3.8</ecNumber>
    </recommendedName>
    <alternativeName>
        <fullName evidence="2">Glutamate-1-semialdehyde aminotransferase</fullName>
        <shortName evidence="2">GSA-AT</shortName>
    </alternativeName>
</protein>
<accession>Q31QJ2</accession>
<keyword id="KW-0002">3D-structure</keyword>
<keyword id="KW-0149">Chlorophyll biosynthesis</keyword>
<keyword id="KW-0963">Cytoplasm</keyword>
<keyword id="KW-0413">Isomerase</keyword>
<keyword id="KW-0627">Porphyrin biosynthesis</keyword>
<keyword id="KW-0663">Pyridoxal phosphate</keyword>
<keyword id="KW-1185">Reference proteome</keyword>
<organism>
    <name type="scientific">Synechococcus elongatus (strain ATCC 33912 / PCC 7942 / FACHB-805)</name>
    <name type="common">Anacystis nidulans R2</name>
    <dbReference type="NCBI Taxonomy" id="1140"/>
    <lineage>
        <taxon>Bacteria</taxon>
        <taxon>Bacillati</taxon>
        <taxon>Cyanobacteriota</taxon>
        <taxon>Cyanophyceae</taxon>
        <taxon>Synechococcales</taxon>
        <taxon>Synechococcaceae</taxon>
        <taxon>Synechococcus</taxon>
    </lineage>
</organism>
<name>GSA_SYNE7</name>
<dbReference type="EC" id="5.4.3.8" evidence="2"/>
<dbReference type="EMBL" id="CP000100">
    <property type="protein sequence ID" value="ABB56677.1"/>
    <property type="status" value="ALT_INIT"/>
    <property type="molecule type" value="Genomic_DNA"/>
</dbReference>
<dbReference type="RefSeq" id="WP_039755849.1">
    <property type="nucleotide sequence ID" value="NZ_JACJTX010000006.1"/>
</dbReference>
<dbReference type="PDB" id="3USF">
    <property type="method" value="X-ray"/>
    <property type="resolution" value="2.46 A"/>
    <property type="chains" value="A/B=7-433"/>
</dbReference>
<dbReference type="PDBsum" id="3USF"/>
<dbReference type="SMR" id="Q31QJ2"/>
<dbReference type="STRING" id="1140.Synpcc7942_0645"/>
<dbReference type="PaxDb" id="1140-Synpcc7942_0645"/>
<dbReference type="GeneID" id="72429478"/>
<dbReference type="KEGG" id="syf:Synpcc7942_0645"/>
<dbReference type="eggNOG" id="COG0001">
    <property type="taxonomic scope" value="Bacteria"/>
</dbReference>
<dbReference type="HOGENOM" id="CLU_016922_1_5_3"/>
<dbReference type="OrthoDB" id="9807885at2"/>
<dbReference type="BioCyc" id="SYNEL:SYNPCC7942_0645-MONOMER"/>
<dbReference type="UniPathway" id="UPA00251">
    <property type="reaction ID" value="UER00317"/>
</dbReference>
<dbReference type="UniPathway" id="UPA00668"/>
<dbReference type="EvolutionaryTrace" id="Q31QJ2"/>
<dbReference type="Proteomes" id="UP000889800">
    <property type="component" value="Chromosome"/>
</dbReference>
<dbReference type="GO" id="GO:0005737">
    <property type="term" value="C:cytoplasm"/>
    <property type="evidence" value="ECO:0007669"/>
    <property type="project" value="UniProtKB-SubCell"/>
</dbReference>
<dbReference type="GO" id="GO:0042286">
    <property type="term" value="F:glutamate-1-semialdehyde 2,1-aminomutase activity"/>
    <property type="evidence" value="ECO:0007669"/>
    <property type="project" value="UniProtKB-UniRule"/>
</dbReference>
<dbReference type="GO" id="GO:0030170">
    <property type="term" value="F:pyridoxal phosphate binding"/>
    <property type="evidence" value="ECO:0007669"/>
    <property type="project" value="InterPro"/>
</dbReference>
<dbReference type="GO" id="GO:0008483">
    <property type="term" value="F:transaminase activity"/>
    <property type="evidence" value="ECO:0007669"/>
    <property type="project" value="InterPro"/>
</dbReference>
<dbReference type="GO" id="GO:0015995">
    <property type="term" value="P:chlorophyll biosynthetic process"/>
    <property type="evidence" value="ECO:0007669"/>
    <property type="project" value="UniProtKB-UniRule"/>
</dbReference>
<dbReference type="GO" id="GO:0006782">
    <property type="term" value="P:protoporphyrinogen IX biosynthetic process"/>
    <property type="evidence" value="ECO:0007669"/>
    <property type="project" value="UniProtKB-UniRule"/>
</dbReference>
<dbReference type="CDD" id="cd00610">
    <property type="entry name" value="OAT_like"/>
    <property type="match status" value="1"/>
</dbReference>
<dbReference type="FunFam" id="3.40.640.10:FF:000021">
    <property type="entry name" value="Glutamate-1-semialdehyde 2,1-aminomutase"/>
    <property type="match status" value="1"/>
</dbReference>
<dbReference type="FunFam" id="3.90.1150.10:FF:000012">
    <property type="entry name" value="Glutamate-1-semialdehyde 2,1-aminomutase"/>
    <property type="match status" value="1"/>
</dbReference>
<dbReference type="Gene3D" id="3.90.1150.10">
    <property type="entry name" value="Aspartate Aminotransferase, domain 1"/>
    <property type="match status" value="1"/>
</dbReference>
<dbReference type="Gene3D" id="3.40.640.10">
    <property type="entry name" value="Type I PLP-dependent aspartate aminotransferase-like (Major domain)"/>
    <property type="match status" value="1"/>
</dbReference>
<dbReference type="HAMAP" id="MF_00375">
    <property type="entry name" value="HemL_aminotrans_3"/>
    <property type="match status" value="1"/>
</dbReference>
<dbReference type="InterPro" id="IPR004639">
    <property type="entry name" value="4pyrrol_synth_GluAld_NH2Trfase"/>
</dbReference>
<dbReference type="InterPro" id="IPR005814">
    <property type="entry name" value="Aminotrans_3"/>
</dbReference>
<dbReference type="InterPro" id="IPR049704">
    <property type="entry name" value="Aminotrans_3_PPA_site"/>
</dbReference>
<dbReference type="InterPro" id="IPR015424">
    <property type="entry name" value="PyrdxlP-dep_Trfase"/>
</dbReference>
<dbReference type="InterPro" id="IPR015421">
    <property type="entry name" value="PyrdxlP-dep_Trfase_major"/>
</dbReference>
<dbReference type="InterPro" id="IPR015422">
    <property type="entry name" value="PyrdxlP-dep_Trfase_small"/>
</dbReference>
<dbReference type="NCBIfam" id="TIGR00713">
    <property type="entry name" value="hemL"/>
    <property type="match status" value="1"/>
</dbReference>
<dbReference type="NCBIfam" id="NF000818">
    <property type="entry name" value="PRK00062.1"/>
    <property type="match status" value="1"/>
</dbReference>
<dbReference type="PANTHER" id="PTHR43713">
    <property type="entry name" value="GLUTAMATE-1-SEMIALDEHYDE 2,1-AMINOMUTASE"/>
    <property type="match status" value="1"/>
</dbReference>
<dbReference type="PANTHER" id="PTHR43713:SF3">
    <property type="entry name" value="GLUTAMATE-1-SEMIALDEHYDE 2,1-AMINOMUTASE 1, CHLOROPLASTIC-RELATED"/>
    <property type="match status" value="1"/>
</dbReference>
<dbReference type="Pfam" id="PF00202">
    <property type="entry name" value="Aminotran_3"/>
    <property type="match status" value="1"/>
</dbReference>
<dbReference type="SUPFAM" id="SSF53383">
    <property type="entry name" value="PLP-dependent transferases"/>
    <property type="match status" value="1"/>
</dbReference>
<dbReference type="PROSITE" id="PS00600">
    <property type="entry name" value="AA_TRANSFER_CLASS_3"/>
    <property type="match status" value="1"/>
</dbReference>
<feature type="initiator methionine" description="Removed" evidence="1">
    <location>
        <position position="1"/>
    </location>
</feature>
<feature type="chain" id="PRO_0000243631" description="Glutamate-1-semialdehyde 2,1-aminomutase">
    <location>
        <begin position="2"/>
        <end position="433"/>
    </location>
</feature>
<feature type="modified residue" description="N6-(pyridoxal phosphate)lysine" evidence="2">
    <location>
        <position position="273"/>
    </location>
</feature>
<feature type="helix" evidence="4">
    <location>
        <begin position="10"/>
        <end position="22"/>
    </location>
</feature>
<feature type="helix" evidence="4">
    <location>
        <begin position="24"/>
        <end position="26"/>
    </location>
</feature>
<feature type="strand" evidence="4">
    <location>
        <begin position="27"/>
        <end position="29"/>
    </location>
</feature>
<feature type="helix" evidence="4">
    <location>
        <begin position="30"/>
        <end position="32"/>
    </location>
</feature>
<feature type="helix" evidence="4">
    <location>
        <begin position="35"/>
        <end position="37"/>
    </location>
</feature>
<feature type="strand" evidence="4">
    <location>
        <begin position="44"/>
        <end position="49"/>
    </location>
</feature>
<feature type="strand" evidence="4">
    <location>
        <begin position="51"/>
        <end position="54"/>
    </location>
</feature>
<feature type="strand" evidence="4">
    <location>
        <begin position="59"/>
        <end position="64"/>
    </location>
</feature>
<feature type="helix" evidence="4">
    <location>
        <begin position="65"/>
        <end position="67"/>
    </location>
</feature>
<feature type="helix" evidence="4">
    <location>
        <begin position="77"/>
        <end position="87"/>
    </location>
</feature>
<feature type="helix" evidence="4">
    <location>
        <begin position="98"/>
        <end position="110"/>
    </location>
</feature>
<feature type="strand" evidence="4">
    <location>
        <begin position="115"/>
        <end position="122"/>
    </location>
</feature>
<feature type="helix" evidence="4">
    <location>
        <begin position="123"/>
        <end position="138"/>
    </location>
</feature>
<feature type="strand" evidence="4">
    <location>
        <begin position="142"/>
        <end position="146"/>
    </location>
</feature>
<feature type="helix" evidence="4">
    <location>
        <begin position="155"/>
        <end position="157"/>
    </location>
</feature>
<feature type="helix" evidence="4">
    <location>
        <begin position="164"/>
        <end position="168"/>
    </location>
</feature>
<feature type="strand" evidence="4">
    <location>
        <begin position="174"/>
        <end position="176"/>
    </location>
</feature>
<feature type="helix" evidence="4">
    <location>
        <begin position="178"/>
        <end position="181"/>
    </location>
</feature>
<feature type="strand" evidence="4">
    <location>
        <begin position="184"/>
        <end position="187"/>
    </location>
</feature>
<feature type="helix" evidence="4">
    <location>
        <begin position="192"/>
        <end position="201"/>
    </location>
</feature>
<feature type="turn" evidence="4">
    <location>
        <begin position="203"/>
        <end position="205"/>
    </location>
</feature>
<feature type="strand" evidence="4">
    <location>
        <begin position="206"/>
        <end position="211"/>
    </location>
</feature>
<feature type="strand" evidence="4">
    <location>
        <begin position="213"/>
        <end position="215"/>
    </location>
</feature>
<feature type="helix" evidence="4">
    <location>
        <begin position="227"/>
        <end position="237"/>
    </location>
</feature>
<feature type="strand" evidence="4">
    <location>
        <begin position="241"/>
        <end position="245"/>
    </location>
</feature>
<feature type="turn" evidence="4">
    <location>
        <begin position="247"/>
        <end position="252"/>
    </location>
</feature>
<feature type="helix" evidence="4">
    <location>
        <begin position="257"/>
        <end position="261"/>
    </location>
</feature>
<feature type="strand" evidence="4">
    <location>
        <begin position="267"/>
        <end position="272"/>
    </location>
</feature>
<feature type="helix" evidence="4">
    <location>
        <begin position="273"/>
        <end position="276"/>
    </location>
</feature>
<feature type="strand" evidence="4">
    <location>
        <begin position="282"/>
        <end position="286"/>
    </location>
</feature>
<feature type="helix" evidence="4">
    <location>
        <begin position="288"/>
        <end position="291"/>
    </location>
</feature>
<feature type="turn" evidence="4">
    <location>
        <begin position="295"/>
        <end position="297"/>
    </location>
</feature>
<feature type="strand" evidence="4">
    <location>
        <begin position="298"/>
        <end position="300"/>
    </location>
</feature>
<feature type="helix" evidence="4">
    <location>
        <begin position="310"/>
        <end position="323"/>
    </location>
</feature>
<feature type="helix" evidence="4">
    <location>
        <begin position="328"/>
        <end position="350"/>
    </location>
</feature>
<feature type="strand" evidence="4">
    <location>
        <begin position="355"/>
        <end position="359"/>
    </location>
</feature>
<feature type="strand" evidence="4">
    <location>
        <begin position="362"/>
        <end position="368"/>
    </location>
</feature>
<feature type="helix" evidence="4">
    <location>
        <begin position="375"/>
        <end position="378"/>
    </location>
</feature>
<feature type="helix" evidence="4">
    <location>
        <begin position="383"/>
        <end position="395"/>
    </location>
</feature>
<feature type="helix" evidence="4">
    <location>
        <begin position="416"/>
        <end position="431"/>
    </location>
</feature>
<gene>
    <name evidence="2" type="primary">hemL</name>
    <name type="ordered locus">Synpcc7942_0645</name>
</gene>
<comment type="catalytic activity">
    <reaction evidence="2">
        <text>(S)-4-amino-5-oxopentanoate = 5-aminolevulinate</text>
        <dbReference type="Rhea" id="RHEA:14265"/>
        <dbReference type="ChEBI" id="CHEBI:57501"/>
        <dbReference type="ChEBI" id="CHEBI:356416"/>
        <dbReference type="EC" id="5.4.3.8"/>
    </reaction>
</comment>
<comment type="cofactor">
    <cofactor evidence="2">
        <name>pyridoxal 5'-phosphate</name>
        <dbReference type="ChEBI" id="CHEBI:597326"/>
    </cofactor>
</comment>
<comment type="pathway">
    <text evidence="2">Porphyrin-containing compound metabolism; protoporphyrin-IX biosynthesis; 5-aminolevulinate from L-glutamyl-tRNA(Glu): step 2/2.</text>
</comment>
<comment type="pathway">
    <text evidence="2">Porphyrin-containing compound metabolism; chlorophyll biosynthesis.</text>
</comment>
<comment type="subunit">
    <text evidence="2">Homodimer.</text>
</comment>
<comment type="subcellular location">
    <subcellularLocation>
        <location evidence="2">Cytoplasm</location>
    </subcellularLocation>
</comment>
<comment type="similarity">
    <text evidence="2">Belongs to the class-III pyridoxal-phosphate-dependent aminotransferase family. HemL subfamily.</text>
</comment>
<comment type="sequence caution" evidence="3">
    <conflict type="erroneous initiation">
        <sequence resource="EMBL-CDS" id="ABB56677"/>
    </conflict>
</comment>
<sequence>MVTSSPFKTIKSDEIFAAAQKLMPGGVSSPVRAFKSVGGQPIVFDRVKDAYAWDVDGNRYIDYVGTWGPAICGHAHPEVIEALKVAMEKGTSFGAPCALENVLAEMVIDAVPSIEMVRFVNSGTEACMAVLRLMRAYTGRDKIIKFEGCYHGHADMFLVKAGSGVATLGLPDSPGVPKSTTANTLTAPYNDLEAVKALFAENPGEIAGVILEPIVGNSGFIVPDAGFLEGLREITLEHDALLVFDEVMTGFRIAYGGVQEKFGVTPDLTTLGKIIGGGLPVGAYGGKREIMQLVAPAGPMYQAGTLSGNPLAMTAGIKTLELLRQPGTYEYLDQITKRLSDGLLAIAQETGHAACGGQVSGMFGFFFTEGPVHNYEDAKKSDLQKFSRFHRGMLEQGIYLAPSQFEAGFTSLAHTEEDIDATLAAARTVMSAL</sequence>
<evidence type="ECO:0000250" key="1"/>
<evidence type="ECO:0000255" key="2">
    <source>
        <dbReference type="HAMAP-Rule" id="MF_00375"/>
    </source>
</evidence>
<evidence type="ECO:0000305" key="3"/>
<evidence type="ECO:0007829" key="4">
    <source>
        <dbReference type="PDB" id="3USF"/>
    </source>
</evidence>
<proteinExistence type="evidence at protein level"/>
<reference key="1">
    <citation type="submission" date="2005-08" db="EMBL/GenBank/DDBJ databases">
        <title>Complete sequence of chromosome 1 of Synechococcus elongatus PCC 7942.</title>
        <authorList>
            <consortium name="US DOE Joint Genome Institute"/>
            <person name="Copeland A."/>
            <person name="Lucas S."/>
            <person name="Lapidus A."/>
            <person name="Barry K."/>
            <person name="Detter J.C."/>
            <person name="Glavina T."/>
            <person name="Hammon N."/>
            <person name="Israni S."/>
            <person name="Pitluck S."/>
            <person name="Schmutz J."/>
            <person name="Larimer F."/>
            <person name="Land M."/>
            <person name="Kyrpides N."/>
            <person name="Lykidis A."/>
            <person name="Golden S."/>
            <person name="Richardson P."/>
        </authorList>
    </citation>
    <scope>NUCLEOTIDE SEQUENCE [LARGE SCALE GENOMIC DNA]</scope>
    <source>
        <strain>ATCC 33912 / PCC 7942 / FACHB-805</strain>
    </source>
</reference>